<gene>
    <name type="primary">MYB24</name>
    <name type="ordered locus">At5g40350</name>
    <name type="ORF">MPO12.60</name>
</gene>
<name>MYB24_ARATH</name>
<keyword id="KW-0010">Activator</keyword>
<keyword id="KW-0238">DNA-binding</keyword>
<keyword id="KW-0539">Nucleus</keyword>
<keyword id="KW-1185">Reference proteome</keyword>
<keyword id="KW-0677">Repeat</keyword>
<keyword id="KW-0804">Transcription</keyword>
<keyword id="KW-0805">Transcription regulation</keyword>
<evidence type="ECO:0000255" key="1">
    <source>
        <dbReference type="PROSITE-ProRule" id="PRU00625"/>
    </source>
</evidence>
<evidence type="ECO:0000269" key="2">
    <source>
    </source>
</evidence>
<evidence type="ECO:0000269" key="3">
    <source>
    </source>
</evidence>
<evidence type="ECO:0000269" key="4">
    <source>
    </source>
</evidence>
<evidence type="ECO:0000269" key="5">
    <source>
    </source>
</evidence>
<evidence type="ECO:0000269" key="6">
    <source>
    </source>
</evidence>
<evidence type="ECO:0000305" key="7"/>
<reference key="1">
    <citation type="journal article" date="1998" name="Plant J.">
        <title>Towards functional characterisation of the members of the R2R3-MYB gene family from Arabidopsis thaliana.</title>
        <authorList>
            <person name="Kranz H.D."/>
            <person name="Denekamp M."/>
            <person name="Greco R."/>
            <person name="Jin H.-L."/>
            <person name="Leyva A."/>
            <person name="Meissner R.C."/>
            <person name="Petroni K."/>
            <person name="Urzainqui A."/>
            <person name="Bevan M."/>
            <person name="Martin C."/>
            <person name="Smeekens S."/>
            <person name="Tonelli C."/>
            <person name="Paz-Ares J."/>
            <person name="Weisshaar B."/>
        </authorList>
    </citation>
    <scope>NUCLEOTIDE SEQUENCE [MRNA]</scope>
    <source>
        <strain>cv. Columbia</strain>
    </source>
</reference>
<reference key="2">
    <citation type="journal article" date="2001" name="Curr. Opin. Plant Biol.">
        <title>The R2R3-MYB gene family in Arabidopsis thaliana.</title>
        <authorList>
            <person name="Stracke R."/>
            <person name="Werber M."/>
            <person name="Weisshaar B."/>
        </authorList>
    </citation>
    <scope>NUCLEOTIDE SEQUENCE [MRNA]</scope>
    <source>
        <strain>cv. Columbia</strain>
    </source>
</reference>
<reference key="3">
    <citation type="submission" date="2004-01" db="EMBL/GenBank/DDBJ databases">
        <title>The MYB transcription factor family in Arabidopsis: a genome-wide cloning and expression pattern analysis.</title>
        <authorList>
            <person name="Qu L."/>
            <person name="Gu H."/>
        </authorList>
    </citation>
    <scope>NUCLEOTIDE SEQUENCE [MRNA]</scope>
</reference>
<reference key="4">
    <citation type="journal article" date="1997" name="DNA Res.">
        <title>Structural analysis of Arabidopsis thaliana chromosome 5. II. Sequence features of the regions of 1,044,062 bp covered by thirteen physically assigned P1 clones.</title>
        <authorList>
            <person name="Kotani H."/>
            <person name="Nakamura Y."/>
            <person name="Sato S."/>
            <person name="Kaneko T."/>
            <person name="Asamizu E."/>
            <person name="Miyajima N."/>
            <person name="Tabata S."/>
        </authorList>
    </citation>
    <scope>NUCLEOTIDE SEQUENCE [LARGE SCALE GENOMIC DNA]</scope>
    <source>
        <strain>cv. Columbia</strain>
    </source>
</reference>
<reference key="5">
    <citation type="journal article" date="2017" name="Plant J.">
        <title>Araport11: a complete reannotation of the Arabidopsis thaliana reference genome.</title>
        <authorList>
            <person name="Cheng C.Y."/>
            <person name="Krishnakumar V."/>
            <person name="Chan A.P."/>
            <person name="Thibaud-Nissen F."/>
            <person name="Schobel S."/>
            <person name="Town C.D."/>
        </authorList>
    </citation>
    <scope>GENOME REANNOTATION</scope>
    <source>
        <strain>cv. Columbia</strain>
    </source>
</reference>
<reference key="6">
    <citation type="submission" date="2002-03" db="EMBL/GenBank/DDBJ databases">
        <title>Full-length cDNA from Arabidopsis thaliana.</title>
        <authorList>
            <person name="Brover V.V."/>
            <person name="Troukhan M.E."/>
            <person name="Alexandrov N.A."/>
            <person name="Lu Y.-P."/>
            <person name="Flavell R.B."/>
            <person name="Feldmann K.A."/>
        </authorList>
    </citation>
    <scope>NUCLEOTIDE SEQUENCE [LARGE SCALE MRNA]</scope>
</reference>
<reference key="7">
    <citation type="journal article" date="2006" name="Plant J.">
        <title>Transcriptional regulators of stamen development in Arabidopsis identified by transcriptional profiling.</title>
        <authorList>
            <person name="Mandaokar A."/>
            <person name="Thines B."/>
            <person name="Shin B."/>
            <person name="Lange B.M."/>
            <person name="Choi G."/>
            <person name="Koo Y.J."/>
            <person name="Yoo Y.J."/>
            <person name="Choi Y.D."/>
            <person name="Choi G."/>
            <person name="Browse J."/>
        </authorList>
    </citation>
    <scope>FUNCTION</scope>
    <scope>DISRUPTION PHENOTYPE</scope>
    <scope>INDUCTION BY JASMONATE</scope>
    <scope>TISSUE SPECIFICITY</scope>
</reference>
<reference key="8">
    <citation type="journal article" date="2007" name="Plant Cell Rep.">
        <title>Over-expression of a flower-specific transcription factor gene AtMYB24 causes aberrant anther development.</title>
        <authorList>
            <person name="Yang X.Y."/>
            <person name="Li J.G."/>
            <person name="Pei M."/>
            <person name="Gu H."/>
            <person name="Chen Z.L."/>
            <person name="Qu L.J."/>
        </authorList>
    </citation>
    <scope>FUNCTION</scope>
    <scope>SUBCELLULAR LOCATION</scope>
    <scope>TISSUE SPECIFICITY</scope>
    <scope>DEVELOPMENTAL STAGE</scope>
</reference>
<reference key="9">
    <citation type="journal article" date="2009" name="Plant Physiol.">
        <title>MYB108 acts together with MYB24 to regulate jasmonate-mediated stamen maturation in Arabidopsis.</title>
        <authorList>
            <person name="Mandaokar A."/>
            <person name="Browse J."/>
        </authorList>
    </citation>
    <scope>FUNCTION</scope>
    <scope>DISRUPTION PHENOTYPE</scope>
</reference>
<reference key="10">
    <citation type="journal article" date="2009" name="PLoS Genet.">
        <title>Gibberellin acts through jasmonate to control the expression of MYB21, MYB24, and MYB57 to promote stamen filament growth in Arabidopsis.</title>
        <authorList>
            <person name="Cheng H."/>
            <person name="Song S."/>
            <person name="Xiao L."/>
            <person name="Soo H.M."/>
            <person name="Cheng Z."/>
            <person name="Xie D."/>
            <person name="Peng J."/>
        </authorList>
    </citation>
    <scope>FUNCTION</scope>
    <scope>TISSUE SPECIFICITY</scope>
    <scope>DISRUPTION PHENOTYPE</scope>
</reference>
<reference key="11">
    <citation type="journal article" date="2011" name="Plant Cell">
        <title>The Jasmonate-ZIM domain proteins interact with the R2R3-MYB transcription factors MYB21 and MYB24 to affect Jasmonate-regulated stamen development in Arabidopsis.</title>
        <authorList>
            <person name="Song S."/>
            <person name="Qi T."/>
            <person name="Huang H."/>
            <person name="Ren Q."/>
            <person name="Wu D."/>
            <person name="Chang C."/>
            <person name="Peng W."/>
            <person name="Liu Y."/>
            <person name="Peng J."/>
            <person name="Xie D."/>
        </authorList>
    </citation>
    <scope>FUNCTION</scope>
    <scope>INTERACTION WITH TIFY10A/JAZ1; TIFY5A/JAZ8 AND TIFY3A/JAZ11</scope>
</reference>
<proteinExistence type="evidence at protein level"/>
<accession>Q9SPG9</accession>
<accession>Q8LCG0</accession>
<organism>
    <name type="scientific">Arabidopsis thaliana</name>
    <name type="common">Mouse-ear cress</name>
    <dbReference type="NCBI Taxonomy" id="3702"/>
    <lineage>
        <taxon>Eukaryota</taxon>
        <taxon>Viridiplantae</taxon>
        <taxon>Streptophyta</taxon>
        <taxon>Embryophyta</taxon>
        <taxon>Tracheophyta</taxon>
        <taxon>Spermatophyta</taxon>
        <taxon>Magnoliopsida</taxon>
        <taxon>eudicotyledons</taxon>
        <taxon>Gunneridae</taxon>
        <taxon>Pentapetalae</taxon>
        <taxon>rosids</taxon>
        <taxon>malvids</taxon>
        <taxon>Brassicales</taxon>
        <taxon>Brassicaceae</taxon>
        <taxon>Camelineae</taxon>
        <taxon>Arabidopsis</taxon>
    </lineage>
</organism>
<dbReference type="EMBL" id="AF175987">
    <property type="protein sequence ID" value="AAD53092.1"/>
    <property type="molecule type" value="mRNA"/>
</dbReference>
<dbReference type="EMBL" id="AY519632">
    <property type="protein sequence ID" value="AAS10102.1"/>
    <property type="molecule type" value="mRNA"/>
</dbReference>
<dbReference type="EMBL" id="AB006702">
    <property type="protein sequence ID" value="BAB11590.1"/>
    <property type="molecule type" value="Genomic_DNA"/>
</dbReference>
<dbReference type="EMBL" id="CP002688">
    <property type="protein sequence ID" value="AED94536.1"/>
    <property type="molecule type" value="Genomic_DNA"/>
</dbReference>
<dbReference type="EMBL" id="AY086615">
    <property type="protein sequence ID" value="AAM63674.1"/>
    <property type="molecule type" value="mRNA"/>
</dbReference>
<dbReference type="RefSeq" id="NP_198851.1">
    <property type="nucleotide sequence ID" value="NM_123399.4"/>
</dbReference>
<dbReference type="SMR" id="Q9SPG9"/>
<dbReference type="BioGRID" id="19284">
    <property type="interactions" value="9"/>
</dbReference>
<dbReference type="FunCoup" id="Q9SPG9">
    <property type="interactions" value="1"/>
</dbReference>
<dbReference type="STRING" id="3702.Q9SPG9"/>
<dbReference type="PaxDb" id="3702-AT5G40350.1"/>
<dbReference type="ProteomicsDB" id="251368"/>
<dbReference type="EnsemblPlants" id="AT5G40350.1">
    <property type="protein sequence ID" value="AT5G40350.1"/>
    <property type="gene ID" value="AT5G40350"/>
</dbReference>
<dbReference type="GeneID" id="834033"/>
<dbReference type="Gramene" id="AT5G40350.1">
    <property type="protein sequence ID" value="AT5G40350.1"/>
    <property type="gene ID" value="AT5G40350"/>
</dbReference>
<dbReference type="KEGG" id="ath:AT5G40350"/>
<dbReference type="Araport" id="AT5G40350"/>
<dbReference type="TAIR" id="AT5G40350">
    <property type="gene designation" value="MYB24"/>
</dbReference>
<dbReference type="eggNOG" id="KOG0048">
    <property type="taxonomic scope" value="Eukaryota"/>
</dbReference>
<dbReference type="HOGENOM" id="CLU_028567_25_8_1"/>
<dbReference type="InParanoid" id="Q9SPG9"/>
<dbReference type="OMA" id="DKRTCNS"/>
<dbReference type="PhylomeDB" id="Q9SPG9"/>
<dbReference type="PRO" id="PR:Q9SPG9"/>
<dbReference type="Proteomes" id="UP000006548">
    <property type="component" value="Chromosome 5"/>
</dbReference>
<dbReference type="ExpressionAtlas" id="Q9SPG9">
    <property type="expression patterns" value="baseline and differential"/>
</dbReference>
<dbReference type="GO" id="GO:0005634">
    <property type="term" value="C:nucleus"/>
    <property type="evidence" value="ECO:0007669"/>
    <property type="project" value="UniProtKB-SubCell"/>
</dbReference>
<dbReference type="GO" id="GO:0003700">
    <property type="term" value="F:DNA-binding transcription factor activity"/>
    <property type="evidence" value="ECO:0000250"/>
    <property type="project" value="TAIR"/>
</dbReference>
<dbReference type="GO" id="GO:1990841">
    <property type="term" value="F:promoter-specific chromatin binding"/>
    <property type="evidence" value="ECO:0000353"/>
    <property type="project" value="TAIR"/>
</dbReference>
<dbReference type="GO" id="GO:0043565">
    <property type="term" value="F:sequence-specific DNA binding"/>
    <property type="evidence" value="ECO:0007669"/>
    <property type="project" value="InterPro"/>
</dbReference>
<dbReference type="GO" id="GO:0009740">
    <property type="term" value="P:gibberellic acid mediated signaling pathway"/>
    <property type="evidence" value="ECO:0000270"/>
    <property type="project" value="TAIR"/>
</dbReference>
<dbReference type="GO" id="GO:0009867">
    <property type="term" value="P:jasmonic acid mediated signaling pathway"/>
    <property type="evidence" value="ECO:0000270"/>
    <property type="project" value="TAIR"/>
</dbReference>
<dbReference type="GO" id="GO:0009753">
    <property type="term" value="P:response to jasmonic acid"/>
    <property type="evidence" value="ECO:0000270"/>
    <property type="project" value="TAIR"/>
</dbReference>
<dbReference type="GO" id="GO:0048443">
    <property type="term" value="P:stamen development"/>
    <property type="evidence" value="ECO:0000315"/>
    <property type="project" value="TAIR"/>
</dbReference>
<dbReference type="GO" id="GO:0080086">
    <property type="term" value="P:stamen filament development"/>
    <property type="evidence" value="ECO:0000316"/>
    <property type="project" value="TAIR"/>
</dbReference>
<dbReference type="CDD" id="cd00167">
    <property type="entry name" value="SANT"/>
    <property type="match status" value="2"/>
</dbReference>
<dbReference type="FunFam" id="1.10.10.60:FF:000011">
    <property type="entry name" value="Myb transcription factor"/>
    <property type="match status" value="1"/>
</dbReference>
<dbReference type="FunFam" id="1.10.10.60:FF:000358">
    <property type="entry name" value="Myb-related protein 305"/>
    <property type="match status" value="1"/>
</dbReference>
<dbReference type="Gene3D" id="1.10.10.60">
    <property type="entry name" value="Homeodomain-like"/>
    <property type="match status" value="2"/>
</dbReference>
<dbReference type="InterPro" id="IPR044676">
    <property type="entry name" value="EOBI/EOBII-like_plant"/>
</dbReference>
<dbReference type="InterPro" id="IPR009057">
    <property type="entry name" value="Homeodomain-like_sf"/>
</dbReference>
<dbReference type="InterPro" id="IPR017930">
    <property type="entry name" value="Myb_dom"/>
</dbReference>
<dbReference type="InterPro" id="IPR001005">
    <property type="entry name" value="SANT/Myb"/>
</dbReference>
<dbReference type="PANTHER" id="PTHR45675">
    <property type="entry name" value="MYB TRANSCRIPTION FACTOR-RELATED-RELATED"/>
    <property type="match status" value="1"/>
</dbReference>
<dbReference type="PANTHER" id="PTHR45675:SF44">
    <property type="entry name" value="TRANSCRIPTION FACTOR MYB24"/>
    <property type="match status" value="1"/>
</dbReference>
<dbReference type="Pfam" id="PF00249">
    <property type="entry name" value="Myb_DNA-binding"/>
    <property type="match status" value="2"/>
</dbReference>
<dbReference type="SMART" id="SM00717">
    <property type="entry name" value="SANT"/>
    <property type="match status" value="2"/>
</dbReference>
<dbReference type="SUPFAM" id="SSF46689">
    <property type="entry name" value="Homeodomain-like"/>
    <property type="match status" value="1"/>
</dbReference>
<dbReference type="PROSITE" id="PS51294">
    <property type="entry name" value="HTH_MYB"/>
    <property type="match status" value="2"/>
</dbReference>
<sequence length="214" mass="24459">MEKRESSGGSGSGDAEVRKGPWTMEEDLILINYIANHGEGVWNSLAKSAGLKRTGKSCRLRWLNYLRPDVRRGNITPEEQLTIMELHAKWGNRWSKIAKHLPGRTDNEIKNFWRTKIQKYIIKSGETTTVGSQSSEFINHHATTSHVMNDTQETMDMYSPTTSYQHASNINQQLNYGNYVPESGSIMMPLSVDQSEQNYWSVDDLWPMNIYNGN</sequence>
<comment type="function">
    <text evidence="2 3 4 5 6">Transcription factor acting redundantly with MYB21 and MYB57 to control stamen filament elongation in the late developed flowers. Contributes with MYB21 to induction of MYB108 by jasmonate. Repressed at the transcript levels by DELLA proteins.</text>
</comment>
<comment type="subunit">
    <text evidence="6">Interacts (via N-terminus) with TIFY10A/JAZ1, TIFY5A/JAZ8 AND TIFY3A/JAZ11.</text>
</comment>
<comment type="subcellular location">
    <subcellularLocation>
        <location evidence="1 3">Nucleus</location>
    </subcellularLocation>
</comment>
<comment type="tissue specificity">
    <text evidence="2 3 5">Expressed specifically in flowers. Expressed in all four whorls of the flower and in the vascular tissue of stamen filament and sepals. Detected in male and female gametophytes, especially in microspores and ovules. Weakly expressed in petals and the upper part of pistils.</text>
</comment>
<comment type="developmental stage">
    <text evidence="3">Tightly regulated during anther development.</text>
</comment>
<comment type="induction">
    <text evidence="2">Up-regulated by jasmonate.</text>
</comment>
<comment type="disruption phenotype">
    <text evidence="2 4 5">No visible phenotype. Myb24 and myb57 double mutant has petals that grew to a final height parallel to the pistil. Myb21 and myb24 double mutant is partially sterile and has petals that just grew out of the sepals but ended at a lower level than the stigma. Myb21, myb24 and myb57 triple mutant has a strongly reduced fertility and an arrested growth of the petals that never grew out of the sepals. Myb24 and myb108 double mutant has a reduced fertility and a greatly reduced seed set.</text>
</comment>
<protein>
    <recommendedName>
        <fullName>Transcription factor MYB24</fullName>
    </recommendedName>
    <alternativeName>
        <fullName>Myb-related protein 24</fullName>
        <shortName>AtMYB24</shortName>
    </alternativeName>
</protein>
<feature type="chain" id="PRO_0000424710" description="Transcription factor MYB24">
    <location>
        <begin position="1"/>
        <end position="214"/>
    </location>
</feature>
<feature type="domain" description="HTH myb-type 1" evidence="1">
    <location>
        <begin position="14"/>
        <end position="66"/>
    </location>
</feature>
<feature type="domain" description="HTH myb-type 2" evidence="1">
    <location>
        <begin position="67"/>
        <end position="121"/>
    </location>
</feature>
<feature type="DNA-binding region" description="H-T-H motif" evidence="1">
    <location>
        <begin position="42"/>
        <end position="66"/>
    </location>
</feature>
<feature type="DNA-binding region" description="H-T-H motif" evidence="1">
    <location>
        <begin position="94"/>
        <end position="117"/>
    </location>
</feature>
<feature type="sequence conflict" description="In Ref. 6; AAM63674." evidence="7" ref="6">
    <original>G</original>
    <variation>S</variation>
    <location>
        <position position="184"/>
    </location>
</feature>